<keyword id="KW-0456">Lyase</keyword>
<comment type="function">
    <text>NHase catalyzes the hydration of various nitrile compounds to the corresponding amides.</text>
</comment>
<comment type="catalytic activity">
    <reaction>
        <text>an aliphatic primary amide = an aliphatic nitrile + H2O</text>
        <dbReference type="Rhea" id="RHEA:12673"/>
        <dbReference type="ChEBI" id="CHEBI:15377"/>
        <dbReference type="ChEBI" id="CHEBI:65285"/>
        <dbReference type="ChEBI" id="CHEBI:80291"/>
        <dbReference type="EC" id="4.2.1.84"/>
    </reaction>
</comment>
<comment type="subunit">
    <text>Heterodimer of an alpha and a beta chain.</text>
</comment>
<comment type="biotechnology">
    <text>Industrial production of acrylamide is now being developed using some of these enzymes.</text>
</comment>
<comment type="similarity">
    <text evidence="1">Belongs to the nitrile hydratase subunit beta family.</text>
</comment>
<protein>
    <recommendedName>
        <fullName>Nitrile hydratase subunit beta</fullName>
        <shortName>NHase</shortName>
        <shortName>Nitrilase</shortName>
        <ecNumber>4.2.1.84</ecNumber>
    </recommendedName>
</protein>
<dbReference type="EC" id="4.2.1.84"/>
<dbReference type="EMBL" id="U89363">
    <property type="protein sequence ID" value="AAC18419.1"/>
    <property type="molecule type" value="Genomic_DNA"/>
</dbReference>
<dbReference type="SMR" id="P97052"/>
<dbReference type="BRENDA" id="4.2.1.84">
    <property type="organism ID" value="5092"/>
</dbReference>
<dbReference type="GO" id="GO:0018822">
    <property type="term" value="F:nitrile hydratase activity"/>
    <property type="evidence" value="ECO:0007669"/>
    <property type="project" value="UniProtKB-EC"/>
</dbReference>
<dbReference type="GO" id="GO:0046914">
    <property type="term" value="F:transition metal ion binding"/>
    <property type="evidence" value="ECO:0007669"/>
    <property type="project" value="InterPro"/>
</dbReference>
<dbReference type="Gene3D" id="2.30.30.50">
    <property type="match status" value="1"/>
</dbReference>
<dbReference type="Gene3D" id="1.10.472.20">
    <property type="entry name" value="Nitrile hydratase, beta subunit"/>
    <property type="match status" value="1"/>
</dbReference>
<dbReference type="InterPro" id="IPR049054">
    <property type="entry name" value="CN_hydtase_beta-like_N"/>
</dbReference>
<dbReference type="InterPro" id="IPR042262">
    <property type="entry name" value="CN_hydtase_beta_C"/>
</dbReference>
<dbReference type="InterPro" id="IPR024690">
    <property type="entry name" value="CN_hydtase_beta_dom_C"/>
</dbReference>
<dbReference type="InterPro" id="IPR008990">
    <property type="entry name" value="Elect_transpt_acc-like_dom_sf"/>
</dbReference>
<dbReference type="InterPro" id="IPR003168">
    <property type="entry name" value="Nitrile_hydratase_bsu"/>
</dbReference>
<dbReference type="NCBIfam" id="TIGR03888">
    <property type="entry name" value="nitrile_beta"/>
    <property type="match status" value="1"/>
</dbReference>
<dbReference type="Pfam" id="PF02211">
    <property type="entry name" value="NHase_beta_C"/>
    <property type="match status" value="1"/>
</dbReference>
<dbReference type="Pfam" id="PF21006">
    <property type="entry name" value="NHase_beta_N"/>
    <property type="match status" value="1"/>
</dbReference>
<dbReference type="PIRSF" id="PIRSF001427">
    <property type="entry name" value="NHase_beta"/>
    <property type="match status" value="1"/>
</dbReference>
<dbReference type="SUPFAM" id="SSF50090">
    <property type="entry name" value="Electron transport accessory proteins"/>
    <property type="match status" value="1"/>
</dbReference>
<accession>P97052</accession>
<gene>
    <name type="primary">nthB</name>
</gene>
<name>NHAB_PSEPU</name>
<sequence>MNGIHDTGGAHGYGPVYREPNEPVFRYDWEKTVMSLLPALLANANFNLDEFRHSIERMGPAHYLEGTYYEHWLHVFENLLVEKGVLTATEVATGKAASGKTATRVLTPAIVDDSSAPGLLRPGGGFSFFPVGDKVRVLNKNPVGHTRMPRYTRAKWGQWSSTMVCFVTPDTAAHGKGEQPQHVYTVSFTSVELWGQDASSPKDTIRVDLWDDYLEPA</sequence>
<feature type="chain" id="PRO_0000186829" description="Nitrile hydratase subunit beta">
    <location>
        <begin position="1"/>
        <end position="217"/>
    </location>
</feature>
<evidence type="ECO:0000305" key="1"/>
<reference key="1">
    <citation type="journal article" date="1997" name="Biochemistry">
        <title>A stereoselective cobalt-containing nitrile hydratase.</title>
        <authorList>
            <person name="Payne M.S."/>
            <person name="Wu S."/>
            <person name="Fallon R.D."/>
            <person name="Tudor G."/>
            <person name="Stieglitz B."/>
            <person name="Turner I.M. Jr."/>
            <person name="Nelson M.J."/>
        </authorList>
    </citation>
    <scope>NUCLEOTIDE SEQUENCE [GENOMIC DNA]</scope>
    <source>
        <strain>NRRL 18668</strain>
    </source>
</reference>
<proteinExistence type="evidence at protein level"/>
<organism>
    <name type="scientific">Pseudomonas putida</name>
    <name type="common">Arthrobacter siderocapsulatus</name>
    <dbReference type="NCBI Taxonomy" id="303"/>
    <lineage>
        <taxon>Bacteria</taxon>
        <taxon>Pseudomonadati</taxon>
        <taxon>Pseudomonadota</taxon>
        <taxon>Gammaproteobacteria</taxon>
        <taxon>Pseudomonadales</taxon>
        <taxon>Pseudomonadaceae</taxon>
        <taxon>Pseudomonas</taxon>
    </lineage>
</organism>